<gene>
    <name evidence="1" type="primary">glmU</name>
    <name type="ordered locus">A9601_06671</name>
</gene>
<reference key="1">
    <citation type="journal article" date="2007" name="PLoS Genet.">
        <title>Patterns and implications of gene gain and loss in the evolution of Prochlorococcus.</title>
        <authorList>
            <person name="Kettler G.C."/>
            <person name="Martiny A.C."/>
            <person name="Huang K."/>
            <person name="Zucker J."/>
            <person name="Coleman M.L."/>
            <person name="Rodrigue S."/>
            <person name="Chen F."/>
            <person name="Lapidus A."/>
            <person name="Ferriera S."/>
            <person name="Johnson J."/>
            <person name="Steglich C."/>
            <person name="Church G.M."/>
            <person name="Richardson P."/>
            <person name="Chisholm S.W."/>
        </authorList>
    </citation>
    <scope>NUCLEOTIDE SEQUENCE [LARGE SCALE GENOMIC DNA]</scope>
    <source>
        <strain>AS9601</strain>
    </source>
</reference>
<organism>
    <name type="scientific">Prochlorococcus marinus (strain AS9601)</name>
    <dbReference type="NCBI Taxonomy" id="146891"/>
    <lineage>
        <taxon>Bacteria</taxon>
        <taxon>Bacillati</taxon>
        <taxon>Cyanobacteriota</taxon>
        <taxon>Cyanophyceae</taxon>
        <taxon>Synechococcales</taxon>
        <taxon>Prochlorococcaceae</taxon>
        <taxon>Prochlorococcus</taxon>
    </lineage>
</organism>
<name>GLMU_PROMS</name>
<dbReference type="EC" id="2.7.7.23" evidence="1"/>
<dbReference type="EC" id="2.3.1.157" evidence="1"/>
<dbReference type="EMBL" id="CP000551">
    <property type="protein sequence ID" value="ABM69953.1"/>
    <property type="molecule type" value="Genomic_DNA"/>
</dbReference>
<dbReference type="RefSeq" id="WP_011818115.1">
    <property type="nucleotide sequence ID" value="NC_008816.1"/>
</dbReference>
<dbReference type="SMR" id="A2BQ92"/>
<dbReference type="STRING" id="146891.A9601_06671"/>
<dbReference type="KEGG" id="pmb:A9601_06671"/>
<dbReference type="eggNOG" id="COG1207">
    <property type="taxonomic scope" value="Bacteria"/>
</dbReference>
<dbReference type="HOGENOM" id="CLU_029499_15_2_3"/>
<dbReference type="OrthoDB" id="9775031at2"/>
<dbReference type="UniPathway" id="UPA00113">
    <property type="reaction ID" value="UER00532"/>
</dbReference>
<dbReference type="UniPathway" id="UPA00113">
    <property type="reaction ID" value="UER00533"/>
</dbReference>
<dbReference type="UniPathway" id="UPA00973"/>
<dbReference type="Proteomes" id="UP000002590">
    <property type="component" value="Chromosome"/>
</dbReference>
<dbReference type="GO" id="GO:0031470">
    <property type="term" value="C:carboxysome"/>
    <property type="evidence" value="ECO:0007669"/>
    <property type="project" value="UniProtKB-ARBA"/>
</dbReference>
<dbReference type="GO" id="GO:0005737">
    <property type="term" value="C:cytoplasm"/>
    <property type="evidence" value="ECO:0007669"/>
    <property type="project" value="UniProtKB-SubCell"/>
</dbReference>
<dbReference type="GO" id="GO:0016020">
    <property type="term" value="C:membrane"/>
    <property type="evidence" value="ECO:0007669"/>
    <property type="project" value="GOC"/>
</dbReference>
<dbReference type="GO" id="GO:0019134">
    <property type="term" value="F:glucosamine-1-phosphate N-acetyltransferase activity"/>
    <property type="evidence" value="ECO:0007669"/>
    <property type="project" value="UniProtKB-UniRule"/>
</dbReference>
<dbReference type="GO" id="GO:0000287">
    <property type="term" value="F:magnesium ion binding"/>
    <property type="evidence" value="ECO:0007669"/>
    <property type="project" value="UniProtKB-UniRule"/>
</dbReference>
<dbReference type="GO" id="GO:0043886">
    <property type="term" value="F:structural constituent of carboxysome shell"/>
    <property type="evidence" value="ECO:0007669"/>
    <property type="project" value="UniProtKB-ARBA"/>
</dbReference>
<dbReference type="GO" id="GO:0003977">
    <property type="term" value="F:UDP-N-acetylglucosamine diphosphorylase activity"/>
    <property type="evidence" value="ECO:0007669"/>
    <property type="project" value="UniProtKB-UniRule"/>
</dbReference>
<dbReference type="GO" id="GO:0000902">
    <property type="term" value="P:cell morphogenesis"/>
    <property type="evidence" value="ECO:0007669"/>
    <property type="project" value="UniProtKB-UniRule"/>
</dbReference>
<dbReference type="GO" id="GO:0071555">
    <property type="term" value="P:cell wall organization"/>
    <property type="evidence" value="ECO:0007669"/>
    <property type="project" value="UniProtKB-KW"/>
</dbReference>
<dbReference type="GO" id="GO:0009245">
    <property type="term" value="P:lipid A biosynthetic process"/>
    <property type="evidence" value="ECO:0007669"/>
    <property type="project" value="UniProtKB-UniRule"/>
</dbReference>
<dbReference type="GO" id="GO:0009252">
    <property type="term" value="P:peptidoglycan biosynthetic process"/>
    <property type="evidence" value="ECO:0007669"/>
    <property type="project" value="UniProtKB-UniRule"/>
</dbReference>
<dbReference type="GO" id="GO:0008360">
    <property type="term" value="P:regulation of cell shape"/>
    <property type="evidence" value="ECO:0007669"/>
    <property type="project" value="UniProtKB-KW"/>
</dbReference>
<dbReference type="GO" id="GO:0006048">
    <property type="term" value="P:UDP-N-acetylglucosamine biosynthetic process"/>
    <property type="evidence" value="ECO:0007669"/>
    <property type="project" value="UniProtKB-UniPathway"/>
</dbReference>
<dbReference type="CDD" id="cd02540">
    <property type="entry name" value="GT2_GlmU_N_bac"/>
    <property type="match status" value="1"/>
</dbReference>
<dbReference type="CDD" id="cd03353">
    <property type="entry name" value="LbH_GlmU_C"/>
    <property type="match status" value="1"/>
</dbReference>
<dbReference type="Gene3D" id="2.160.10.10">
    <property type="entry name" value="Hexapeptide repeat proteins"/>
    <property type="match status" value="1"/>
</dbReference>
<dbReference type="Gene3D" id="3.90.550.10">
    <property type="entry name" value="Spore Coat Polysaccharide Biosynthesis Protein SpsA, Chain A"/>
    <property type="match status" value="1"/>
</dbReference>
<dbReference type="HAMAP" id="MF_01631">
    <property type="entry name" value="GlmU"/>
    <property type="match status" value="1"/>
</dbReference>
<dbReference type="InterPro" id="IPR005882">
    <property type="entry name" value="Bifunctional_GlmU"/>
</dbReference>
<dbReference type="InterPro" id="IPR050065">
    <property type="entry name" value="GlmU-like"/>
</dbReference>
<dbReference type="InterPro" id="IPR038009">
    <property type="entry name" value="GlmU_C_LbH"/>
</dbReference>
<dbReference type="InterPro" id="IPR001451">
    <property type="entry name" value="Hexapep"/>
</dbReference>
<dbReference type="InterPro" id="IPR025877">
    <property type="entry name" value="MobA-like_NTP_Trfase"/>
</dbReference>
<dbReference type="InterPro" id="IPR029044">
    <property type="entry name" value="Nucleotide-diphossugar_trans"/>
</dbReference>
<dbReference type="InterPro" id="IPR011004">
    <property type="entry name" value="Trimer_LpxA-like_sf"/>
</dbReference>
<dbReference type="NCBIfam" id="TIGR01173">
    <property type="entry name" value="glmU"/>
    <property type="match status" value="1"/>
</dbReference>
<dbReference type="NCBIfam" id="NF010940">
    <property type="entry name" value="PRK14360.1"/>
    <property type="match status" value="1"/>
</dbReference>
<dbReference type="PANTHER" id="PTHR43584:SF3">
    <property type="entry name" value="BIFUNCTIONAL PROTEIN GLMU"/>
    <property type="match status" value="1"/>
</dbReference>
<dbReference type="PANTHER" id="PTHR43584">
    <property type="entry name" value="NUCLEOTIDYL TRANSFERASE"/>
    <property type="match status" value="1"/>
</dbReference>
<dbReference type="Pfam" id="PF00132">
    <property type="entry name" value="Hexapep"/>
    <property type="match status" value="1"/>
</dbReference>
<dbReference type="Pfam" id="PF12804">
    <property type="entry name" value="NTP_transf_3"/>
    <property type="match status" value="1"/>
</dbReference>
<dbReference type="SUPFAM" id="SSF53448">
    <property type="entry name" value="Nucleotide-diphospho-sugar transferases"/>
    <property type="match status" value="1"/>
</dbReference>
<dbReference type="SUPFAM" id="SSF51161">
    <property type="entry name" value="Trimeric LpxA-like enzymes"/>
    <property type="match status" value="1"/>
</dbReference>
<evidence type="ECO:0000255" key="1">
    <source>
        <dbReference type="HAMAP-Rule" id="MF_01631"/>
    </source>
</evidence>
<comment type="function">
    <text evidence="1">Catalyzes the last two sequential reactions in the de novo biosynthetic pathway for UDP-N-acetylglucosamine (UDP-GlcNAc). The C-terminal domain catalyzes the transfer of acetyl group from acetyl coenzyme A to glucosamine-1-phosphate (GlcN-1-P) to produce N-acetylglucosamine-1-phosphate (GlcNAc-1-P), which is converted into UDP-GlcNAc by the transfer of uridine 5-monophosphate (from uridine 5-triphosphate), a reaction catalyzed by the N-terminal domain.</text>
</comment>
<comment type="catalytic activity">
    <reaction evidence="1">
        <text>alpha-D-glucosamine 1-phosphate + acetyl-CoA = N-acetyl-alpha-D-glucosamine 1-phosphate + CoA + H(+)</text>
        <dbReference type="Rhea" id="RHEA:13725"/>
        <dbReference type="ChEBI" id="CHEBI:15378"/>
        <dbReference type="ChEBI" id="CHEBI:57287"/>
        <dbReference type="ChEBI" id="CHEBI:57288"/>
        <dbReference type="ChEBI" id="CHEBI:57776"/>
        <dbReference type="ChEBI" id="CHEBI:58516"/>
        <dbReference type="EC" id="2.3.1.157"/>
    </reaction>
</comment>
<comment type="catalytic activity">
    <reaction evidence="1">
        <text>N-acetyl-alpha-D-glucosamine 1-phosphate + UTP + H(+) = UDP-N-acetyl-alpha-D-glucosamine + diphosphate</text>
        <dbReference type="Rhea" id="RHEA:13509"/>
        <dbReference type="ChEBI" id="CHEBI:15378"/>
        <dbReference type="ChEBI" id="CHEBI:33019"/>
        <dbReference type="ChEBI" id="CHEBI:46398"/>
        <dbReference type="ChEBI" id="CHEBI:57705"/>
        <dbReference type="ChEBI" id="CHEBI:57776"/>
        <dbReference type="EC" id="2.7.7.23"/>
    </reaction>
</comment>
<comment type="cofactor">
    <cofactor evidence="1">
        <name>Mg(2+)</name>
        <dbReference type="ChEBI" id="CHEBI:18420"/>
    </cofactor>
    <text evidence="1">Binds 1 Mg(2+) ion per subunit.</text>
</comment>
<comment type="pathway">
    <text evidence="1">Nucleotide-sugar biosynthesis; UDP-N-acetyl-alpha-D-glucosamine biosynthesis; N-acetyl-alpha-D-glucosamine 1-phosphate from alpha-D-glucosamine 6-phosphate (route II): step 2/2.</text>
</comment>
<comment type="pathway">
    <text evidence="1">Nucleotide-sugar biosynthesis; UDP-N-acetyl-alpha-D-glucosamine biosynthesis; UDP-N-acetyl-alpha-D-glucosamine from N-acetyl-alpha-D-glucosamine 1-phosphate: step 1/1.</text>
</comment>
<comment type="pathway">
    <text evidence="1">Bacterial outer membrane biogenesis; LPS lipid A biosynthesis.</text>
</comment>
<comment type="subunit">
    <text evidence="1">Homotrimer.</text>
</comment>
<comment type="subcellular location">
    <subcellularLocation>
        <location evidence="1">Cytoplasm</location>
    </subcellularLocation>
</comment>
<comment type="similarity">
    <text evidence="1">In the N-terminal section; belongs to the N-acetylglucosamine-1-phosphate uridyltransferase family.</text>
</comment>
<comment type="similarity">
    <text evidence="1">In the C-terminal section; belongs to the transferase hexapeptide repeat family.</text>
</comment>
<keyword id="KW-0012">Acyltransferase</keyword>
<keyword id="KW-0133">Cell shape</keyword>
<keyword id="KW-0961">Cell wall biogenesis/degradation</keyword>
<keyword id="KW-0963">Cytoplasm</keyword>
<keyword id="KW-0460">Magnesium</keyword>
<keyword id="KW-0479">Metal-binding</keyword>
<keyword id="KW-0511">Multifunctional enzyme</keyword>
<keyword id="KW-0548">Nucleotidyltransferase</keyword>
<keyword id="KW-0573">Peptidoglycan synthesis</keyword>
<keyword id="KW-0677">Repeat</keyword>
<keyword id="KW-0808">Transferase</keyword>
<feature type="chain" id="PRO_1000056183" description="Bifunctional protein GlmU">
    <location>
        <begin position="1"/>
        <end position="449"/>
    </location>
</feature>
<feature type="region of interest" description="Pyrophosphorylase" evidence="1">
    <location>
        <begin position="1"/>
        <end position="225"/>
    </location>
</feature>
<feature type="region of interest" description="Linker" evidence="1">
    <location>
        <begin position="226"/>
        <end position="246"/>
    </location>
</feature>
<feature type="region of interest" description="N-acetyltransferase" evidence="1">
    <location>
        <begin position="247"/>
        <end position="449"/>
    </location>
</feature>
<feature type="active site" description="Proton acceptor" evidence="1">
    <location>
        <position position="358"/>
    </location>
</feature>
<feature type="binding site" evidence="1">
    <location>
        <begin position="7"/>
        <end position="10"/>
    </location>
    <ligand>
        <name>UDP-N-acetyl-alpha-D-glucosamine</name>
        <dbReference type="ChEBI" id="CHEBI:57705"/>
    </ligand>
</feature>
<feature type="binding site" evidence="1">
    <location>
        <position position="21"/>
    </location>
    <ligand>
        <name>UDP-N-acetyl-alpha-D-glucosamine</name>
        <dbReference type="ChEBI" id="CHEBI:57705"/>
    </ligand>
</feature>
<feature type="binding site" evidence="1">
    <location>
        <position position="73"/>
    </location>
    <ligand>
        <name>UDP-N-acetyl-alpha-D-glucosamine</name>
        <dbReference type="ChEBI" id="CHEBI:57705"/>
    </ligand>
</feature>
<feature type="binding site" evidence="1">
    <location>
        <begin position="78"/>
        <end position="79"/>
    </location>
    <ligand>
        <name>UDP-N-acetyl-alpha-D-glucosamine</name>
        <dbReference type="ChEBI" id="CHEBI:57705"/>
    </ligand>
</feature>
<feature type="binding site" evidence="1">
    <location>
        <position position="103"/>
    </location>
    <ligand>
        <name>Mg(2+)</name>
        <dbReference type="ChEBI" id="CHEBI:18420"/>
    </ligand>
</feature>
<feature type="binding site" evidence="1">
    <location>
        <position position="140"/>
    </location>
    <ligand>
        <name>UDP-N-acetyl-alpha-D-glucosamine</name>
        <dbReference type="ChEBI" id="CHEBI:57705"/>
    </ligand>
</feature>
<feature type="binding site" evidence="1">
    <location>
        <position position="154"/>
    </location>
    <ligand>
        <name>UDP-N-acetyl-alpha-D-glucosamine</name>
        <dbReference type="ChEBI" id="CHEBI:57705"/>
    </ligand>
</feature>
<feature type="binding site" evidence="1">
    <location>
        <position position="169"/>
    </location>
    <ligand>
        <name>UDP-N-acetyl-alpha-D-glucosamine</name>
        <dbReference type="ChEBI" id="CHEBI:57705"/>
    </ligand>
</feature>
<feature type="binding site" evidence="1">
    <location>
        <position position="223"/>
    </location>
    <ligand>
        <name>Mg(2+)</name>
        <dbReference type="ChEBI" id="CHEBI:18420"/>
    </ligand>
</feature>
<feature type="binding site" evidence="1">
    <location>
        <position position="223"/>
    </location>
    <ligand>
        <name>UDP-N-acetyl-alpha-D-glucosamine</name>
        <dbReference type="ChEBI" id="CHEBI:57705"/>
    </ligand>
</feature>
<feature type="binding site" evidence="1">
    <location>
        <position position="328"/>
    </location>
    <ligand>
        <name>UDP-N-acetyl-alpha-D-glucosamine</name>
        <dbReference type="ChEBI" id="CHEBI:57705"/>
    </ligand>
</feature>
<feature type="binding site" evidence="1">
    <location>
        <position position="346"/>
    </location>
    <ligand>
        <name>UDP-N-acetyl-alpha-D-glucosamine</name>
        <dbReference type="ChEBI" id="CHEBI:57705"/>
    </ligand>
</feature>
<feature type="binding site" evidence="1">
    <location>
        <position position="361"/>
    </location>
    <ligand>
        <name>UDP-N-acetyl-alpha-D-glucosamine</name>
        <dbReference type="ChEBI" id="CHEBI:57705"/>
    </ligand>
</feature>
<feature type="binding site" evidence="1">
    <location>
        <position position="372"/>
    </location>
    <ligand>
        <name>UDP-N-acetyl-alpha-D-glucosamine</name>
        <dbReference type="ChEBI" id="CHEBI:57705"/>
    </ligand>
</feature>
<feature type="binding site" evidence="1">
    <location>
        <position position="375"/>
    </location>
    <ligand>
        <name>acetyl-CoA</name>
        <dbReference type="ChEBI" id="CHEBI:57288"/>
    </ligand>
</feature>
<feature type="binding site" evidence="1">
    <location>
        <position position="418"/>
    </location>
    <ligand>
        <name>acetyl-CoA</name>
        <dbReference type="ChEBI" id="CHEBI:57288"/>
    </ligand>
</feature>
<feature type="binding site" evidence="1">
    <location>
        <position position="435"/>
    </location>
    <ligand>
        <name>acetyl-CoA</name>
        <dbReference type="ChEBI" id="CHEBI:57288"/>
    </ligand>
</feature>
<sequence length="449" mass="49500">MLSVAILAAGKGTRMESSLPKVLHKISGKSLLQRVIDSCAELKPDKIFVITGHKSKEVQKSIPKDKKIHVVVQEPQSGTGHAIQVLCSEVKKHEGKLLVLNGDVPLIRPTTLKRLLYLHDSKNADVSLITTKKTNPHGYGRVFLNGDFIERIVEEKDCNELERENPLINAGVYCFNWGNLSEIINTLQSNNNQKEIYLTDTISLLKNSLSLEVEDNGELQGINNRIHLSECEECIQNSIKEKHMLNGVTFINKASCSISEEAEIGKDVIIEANTHIRGNTKINSHCIIGPNTFIENSNVGLQCEISNSTVYDSQVMDHIKIGPYSHIRPNSKISSYSKIGNFVEIKNSQLEEETKVNHLSYIGDSIIGRSTNIGAGTITANFDGQKKYQTKIGKNSSIGANTVFVAPINLGESVTTGAGSVITKDSKDNSLAISRTKQVNIENWKKKKS</sequence>
<protein>
    <recommendedName>
        <fullName evidence="1">Bifunctional protein GlmU</fullName>
    </recommendedName>
    <domain>
        <recommendedName>
            <fullName evidence="1">UDP-N-acetylglucosamine pyrophosphorylase</fullName>
            <ecNumber evidence="1">2.7.7.23</ecNumber>
        </recommendedName>
        <alternativeName>
            <fullName evidence="1">N-acetylglucosamine-1-phosphate uridyltransferase</fullName>
        </alternativeName>
    </domain>
    <domain>
        <recommendedName>
            <fullName evidence="1">Glucosamine-1-phosphate N-acetyltransferase</fullName>
            <ecNumber evidence="1">2.3.1.157</ecNumber>
        </recommendedName>
    </domain>
</protein>
<proteinExistence type="inferred from homology"/>
<accession>A2BQ92</accession>